<dbReference type="EC" id="5.3.1.24" evidence="1"/>
<dbReference type="EMBL" id="CP000001">
    <property type="protein sequence ID" value="AAU19113.1"/>
    <property type="molecule type" value="Genomic_DNA"/>
</dbReference>
<dbReference type="RefSeq" id="WP_000865108.1">
    <property type="nucleotide sequence ID" value="NC_006274.1"/>
</dbReference>
<dbReference type="SMR" id="Q63EC8"/>
<dbReference type="KEGG" id="bcz:BCE33L1134"/>
<dbReference type="PATRIC" id="fig|288681.22.peg.4430"/>
<dbReference type="UniPathway" id="UPA00035">
    <property type="reaction ID" value="UER00042"/>
</dbReference>
<dbReference type="Proteomes" id="UP000002612">
    <property type="component" value="Chromosome"/>
</dbReference>
<dbReference type="GO" id="GO:0004640">
    <property type="term" value="F:phosphoribosylanthranilate isomerase activity"/>
    <property type="evidence" value="ECO:0007669"/>
    <property type="project" value="UniProtKB-UniRule"/>
</dbReference>
<dbReference type="GO" id="GO:0000162">
    <property type="term" value="P:L-tryptophan biosynthetic process"/>
    <property type="evidence" value="ECO:0007669"/>
    <property type="project" value="UniProtKB-UniRule"/>
</dbReference>
<dbReference type="CDD" id="cd00405">
    <property type="entry name" value="PRAI"/>
    <property type="match status" value="1"/>
</dbReference>
<dbReference type="FunFam" id="3.20.20.70:FF:000075">
    <property type="entry name" value="Tryptophan biosynthesis protein TRP1"/>
    <property type="match status" value="1"/>
</dbReference>
<dbReference type="Gene3D" id="3.20.20.70">
    <property type="entry name" value="Aldolase class I"/>
    <property type="match status" value="1"/>
</dbReference>
<dbReference type="HAMAP" id="MF_00135">
    <property type="entry name" value="PRAI"/>
    <property type="match status" value="1"/>
</dbReference>
<dbReference type="InterPro" id="IPR013785">
    <property type="entry name" value="Aldolase_TIM"/>
</dbReference>
<dbReference type="InterPro" id="IPR001240">
    <property type="entry name" value="PRAI_dom"/>
</dbReference>
<dbReference type="InterPro" id="IPR011060">
    <property type="entry name" value="RibuloseP-bd_barrel"/>
</dbReference>
<dbReference type="InterPro" id="IPR044643">
    <property type="entry name" value="TrpF_fam"/>
</dbReference>
<dbReference type="NCBIfam" id="NF002297">
    <property type="entry name" value="PRK01222.1-3"/>
    <property type="match status" value="1"/>
</dbReference>
<dbReference type="PANTHER" id="PTHR42894">
    <property type="entry name" value="N-(5'-PHOSPHORIBOSYL)ANTHRANILATE ISOMERASE"/>
    <property type="match status" value="1"/>
</dbReference>
<dbReference type="PANTHER" id="PTHR42894:SF1">
    <property type="entry name" value="N-(5'-PHOSPHORIBOSYL)ANTHRANILATE ISOMERASE"/>
    <property type="match status" value="1"/>
</dbReference>
<dbReference type="Pfam" id="PF00697">
    <property type="entry name" value="PRAI"/>
    <property type="match status" value="1"/>
</dbReference>
<dbReference type="SUPFAM" id="SSF51366">
    <property type="entry name" value="Ribulose-phoshate binding barrel"/>
    <property type="match status" value="1"/>
</dbReference>
<protein>
    <recommendedName>
        <fullName evidence="1">N-(5'-phosphoribosyl)anthranilate isomerase</fullName>
        <shortName evidence="1">PRAI</shortName>
        <ecNumber evidence="1">5.3.1.24</ecNumber>
    </recommendedName>
</protein>
<feature type="chain" id="PRO_1000018580" description="N-(5'-phosphoribosyl)anthranilate isomerase">
    <location>
        <begin position="1"/>
        <end position="204"/>
    </location>
</feature>
<reference key="1">
    <citation type="journal article" date="2006" name="J. Bacteriol.">
        <title>Pathogenomic sequence analysis of Bacillus cereus and Bacillus thuringiensis isolates closely related to Bacillus anthracis.</title>
        <authorList>
            <person name="Han C.S."/>
            <person name="Xie G."/>
            <person name="Challacombe J.F."/>
            <person name="Altherr M.R."/>
            <person name="Bhotika S.S."/>
            <person name="Bruce D."/>
            <person name="Campbell C.S."/>
            <person name="Campbell M.L."/>
            <person name="Chen J."/>
            <person name="Chertkov O."/>
            <person name="Cleland C."/>
            <person name="Dimitrijevic M."/>
            <person name="Doggett N.A."/>
            <person name="Fawcett J.J."/>
            <person name="Glavina T."/>
            <person name="Goodwin L.A."/>
            <person name="Hill K.K."/>
            <person name="Hitchcock P."/>
            <person name="Jackson P.J."/>
            <person name="Keim P."/>
            <person name="Kewalramani A.R."/>
            <person name="Longmire J."/>
            <person name="Lucas S."/>
            <person name="Malfatti S."/>
            <person name="McMurry K."/>
            <person name="Meincke L.J."/>
            <person name="Misra M."/>
            <person name="Moseman B.L."/>
            <person name="Mundt M."/>
            <person name="Munk A.C."/>
            <person name="Okinaka R.T."/>
            <person name="Parson-Quintana B."/>
            <person name="Reilly L.P."/>
            <person name="Richardson P."/>
            <person name="Robinson D.L."/>
            <person name="Rubin E."/>
            <person name="Saunders E."/>
            <person name="Tapia R."/>
            <person name="Tesmer J.G."/>
            <person name="Thayer N."/>
            <person name="Thompson L.S."/>
            <person name="Tice H."/>
            <person name="Ticknor L.O."/>
            <person name="Wills P.L."/>
            <person name="Brettin T.S."/>
            <person name="Gilna P."/>
        </authorList>
    </citation>
    <scope>NUCLEOTIDE SEQUENCE [LARGE SCALE GENOMIC DNA]</scope>
    <source>
        <strain>ZK / E33L</strain>
    </source>
</reference>
<keyword id="KW-0028">Amino-acid biosynthesis</keyword>
<keyword id="KW-0057">Aromatic amino acid biosynthesis</keyword>
<keyword id="KW-0413">Isomerase</keyword>
<keyword id="KW-0822">Tryptophan biosynthesis</keyword>
<comment type="catalytic activity">
    <reaction evidence="1">
        <text>N-(5-phospho-beta-D-ribosyl)anthranilate = 1-(2-carboxyphenylamino)-1-deoxy-D-ribulose 5-phosphate</text>
        <dbReference type="Rhea" id="RHEA:21540"/>
        <dbReference type="ChEBI" id="CHEBI:18277"/>
        <dbReference type="ChEBI" id="CHEBI:58613"/>
        <dbReference type="EC" id="5.3.1.24"/>
    </reaction>
</comment>
<comment type="pathway">
    <text evidence="1">Amino-acid biosynthesis; L-tryptophan biosynthesis; L-tryptophan from chorismate: step 3/5.</text>
</comment>
<comment type="similarity">
    <text evidence="1">Belongs to the TrpF family.</text>
</comment>
<gene>
    <name evidence="1" type="primary">trpF</name>
    <name type="ordered locus">BCE33L1134</name>
</gene>
<accession>Q63EC8</accession>
<sequence>MKVKICGITDMETAKRACEYGADALGFVFAESKRKITPGLAKEIIQELPANVLKIGVFVNESVEVIQKITENCGLTHVQLHGGEDNHQIRRLNIPSIKSLGVTSESDMKNAQGYETDYILFDSPKEKFHGGNGKTFSWELLAHMPKELREKAILAGGLNTLNIEEAIRTVRPYMVDVSSGVETEGKKDVEKIKQFIIKAKECSK</sequence>
<proteinExistence type="inferred from homology"/>
<name>TRPF_BACCZ</name>
<organism>
    <name type="scientific">Bacillus cereus (strain ZK / E33L)</name>
    <dbReference type="NCBI Taxonomy" id="288681"/>
    <lineage>
        <taxon>Bacteria</taxon>
        <taxon>Bacillati</taxon>
        <taxon>Bacillota</taxon>
        <taxon>Bacilli</taxon>
        <taxon>Bacillales</taxon>
        <taxon>Bacillaceae</taxon>
        <taxon>Bacillus</taxon>
        <taxon>Bacillus cereus group</taxon>
    </lineage>
</organism>
<evidence type="ECO:0000255" key="1">
    <source>
        <dbReference type="HAMAP-Rule" id="MF_00135"/>
    </source>
</evidence>